<reference key="1">
    <citation type="submission" date="2005-03" db="EMBL/GenBank/DDBJ databases">
        <title>Brevibacillus brevis strain 47, complete genome.</title>
        <authorList>
            <person name="Hosoyama A."/>
            <person name="Yamada R."/>
            <person name="Hongo Y."/>
            <person name="Terui Y."/>
            <person name="Ankai A."/>
            <person name="Masuyama W."/>
            <person name="Sekiguchi M."/>
            <person name="Takeda T."/>
            <person name="Asano K."/>
            <person name="Ohji S."/>
            <person name="Ichikawa N."/>
            <person name="Narita S."/>
            <person name="Aoki N."/>
            <person name="Miura H."/>
            <person name="Matsushita S."/>
            <person name="Sekigawa T."/>
            <person name="Yamagata H."/>
            <person name="Yoshikawa H."/>
            <person name="Udaka S."/>
            <person name="Tanikawa S."/>
            <person name="Fujita N."/>
        </authorList>
    </citation>
    <scope>NUCLEOTIDE SEQUENCE [LARGE SCALE GENOMIC DNA]</scope>
    <source>
        <strain>47 / JCM 6285 / NBRC 100599</strain>
    </source>
</reference>
<sequence>MFTKADKNKARKKRHLRIRKRVIGTTIRPRLNVFRSSKHIYAQLIDDATGVTLVSASSLDKELGLNNGANVEAATAVGTLIAKRAQEKGATEVIFDRGGYIYHGRIKALAEAAREAGLQF</sequence>
<protein>
    <recommendedName>
        <fullName evidence="1">Large ribosomal subunit protein uL18</fullName>
    </recommendedName>
    <alternativeName>
        <fullName evidence="2">50S ribosomal protein L18</fullName>
    </alternativeName>
</protein>
<organism>
    <name type="scientific">Brevibacillus brevis (strain 47 / JCM 6285 / NBRC 100599)</name>
    <dbReference type="NCBI Taxonomy" id="358681"/>
    <lineage>
        <taxon>Bacteria</taxon>
        <taxon>Bacillati</taxon>
        <taxon>Bacillota</taxon>
        <taxon>Bacilli</taxon>
        <taxon>Bacillales</taxon>
        <taxon>Paenibacillaceae</taxon>
        <taxon>Brevibacillus</taxon>
    </lineage>
</organism>
<accession>C0ZIJ6</accession>
<keyword id="KW-1185">Reference proteome</keyword>
<keyword id="KW-0687">Ribonucleoprotein</keyword>
<keyword id="KW-0689">Ribosomal protein</keyword>
<keyword id="KW-0694">RNA-binding</keyword>
<keyword id="KW-0699">rRNA-binding</keyword>
<dbReference type="EMBL" id="AP008955">
    <property type="protein sequence ID" value="BAH41214.1"/>
    <property type="molecule type" value="Genomic_DNA"/>
</dbReference>
<dbReference type="RefSeq" id="WP_012683994.1">
    <property type="nucleotide sequence ID" value="NC_012491.1"/>
</dbReference>
<dbReference type="SMR" id="C0ZIJ6"/>
<dbReference type="STRING" id="358681.BBR47_02370"/>
<dbReference type="KEGG" id="bbe:BBR47_02370"/>
<dbReference type="eggNOG" id="COG0256">
    <property type="taxonomic scope" value="Bacteria"/>
</dbReference>
<dbReference type="HOGENOM" id="CLU_098841_0_1_9"/>
<dbReference type="Proteomes" id="UP000001877">
    <property type="component" value="Chromosome"/>
</dbReference>
<dbReference type="GO" id="GO:0022625">
    <property type="term" value="C:cytosolic large ribosomal subunit"/>
    <property type="evidence" value="ECO:0007669"/>
    <property type="project" value="TreeGrafter"/>
</dbReference>
<dbReference type="GO" id="GO:0008097">
    <property type="term" value="F:5S rRNA binding"/>
    <property type="evidence" value="ECO:0007669"/>
    <property type="project" value="TreeGrafter"/>
</dbReference>
<dbReference type="GO" id="GO:0003735">
    <property type="term" value="F:structural constituent of ribosome"/>
    <property type="evidence" value="ECO:0007669"/>
    <property type="project" value="InterPro"/>
</dbReference>
<dbReference type="GO" id="GO:0006412">
    <property type="term" value="P:translation"/>
    <property type="evidence" value="ECO:0007669"/>
    <property type="project" value="UniProtKB-UniRule"/>
</dbReference>
<dbReference type="CDD" id="cd00432">
    <property type="entry name" value="Ribosomal_L18_L5e"/>
    <property type="match status" value="1"/>
</dbReference>
<dbReference type="FunFam" id="3.30.420.100:FF:000001">
    <property type="entry name" value="50S ribosomal protein L18"/>
    <property type="match status" value="1"/>
</dbReference>
<dbReference type="Gene3D" id="3.30.420.100">
    <property type="match status" value="1"/>
</dbReference>
<dbReference type="HAMAP" id="MF_01337_B">
    <property type="entry name" value="Ribosomal_uL18_B"/>
    <property type="match status" value="1"/>
</dbReference>
<dbReference type="InterPro" id="IPR004389">
    <property type="entry name" value="Ribosomal_uL18_bac-type"/>
</dbReference>
<dbReference type="InterPro" id="IPR005484">
    <property type="entry name" value="Ribosomal_uL18_bac/euk"/>
</dbReference>
<dbReference type="NCBIfam" id="TIGR00060">
    <property type="entry name" value="L18_bact"/>
    <property type="match status" value="1"/>
</dbReference>
<dbReference type="PANTHER" id="PTHR12899">
    <property type="entry name" value="39S RIBOSOMAL PROTEIN L18, MITOCHONDRIAL"/>
    <property type="match status" value="1"/>
</dbReference>
<dbReference type="PANTHER" id="PTHR12899:SF3">
    <property type="entry name" value="LARGE RIBOSOMAL SUBUNIT PROTEIN UL18M"/>
    <property type="match status" value="1"/>
</dbReference>
<dbReference type="Pfam" id="PF00861">
    <property type="entry name" value="Ribosomal_L18p"/>
    <property type="match status" value="1"/>
</dbReference>
<dbReference type="SUPFAM" id="SSF53137">
    <property type="entry name" value="Translational machinery components"/>
    <property type="match status" value="1"/>
</dbReference>
<comment type="function">
    <text evidence="1">This is one of the proteins that bind and probably mediate the attachment of the 5S RNA into the large ribosomal subunit, where it forms part of the central protuberance.</text>
</comment>
<comment type="subunit">
    <text evidence="1">Part of the 50S ribosomal subunit; part of the 5S rRNA/L5/L18/L25 subcomplex. Contacts the 5S and 23S rRNAs.</text>
</comment>
<comment type="similarity">
    <text evidence="1">Belongs to the universal ribosomal protein uL18 family.</text>
</comment>
<proteinExistence type="inferred from homology"/>
<name>RL18_BREBN</name>
<evidence type="ECO:0000255" key="1">
    <source>
        <dbReference type="HAMAP-Rule" id="MF_01337"/>
    </source>
</evidence>
<evidence type="ECO:0000305" key="2"/>
<feature type="chain" id="PRO_1000166211" description="Large ribosomal subunit protein uL18">
    <location>
        <begin position="1"/>
        <end position="120"/>
    </location>
</feature>
<gene>
    <name evidence="1" type="primary">rplR</name>
    <name type="ordered locus">BBR47_02370</name>
</gene>